<feature type="chain" id="PRO_0000320983" description="Protein translocase subunit SecA">
    <location>
        <begin position="1"/>
        <end position="1160"/>
    </location>
</feature>
<feature type="region of interest" description="Disordered" evidence="2">
    <location>
        <begin position="342"/>
        <end position="362"/>
    </location>
</feature>
<feature type="region of interest" description="Disordered" evidence="2">
    <location>
        <begin position="1060"/>
        <end position="1134"/>
    </location>
</feature>
<feature type="compositionally biased region" description="Acidic residues" evidence="2">
    <location>
        <begin position="344"/>
        <end position="353"/>
    </location>
</feature>
<feature type="compositionally biased region" description="Polar residues" evidence="2">
    <location>
        <begin position="1074"/>
        <end position="1083"/>
    </location>
</feature>
<feature type="compositionally biased region" description="Basic and acidic residues" evidence="2">
    <location>
        <begin position="1104"/>
        <end position="1115"/>
    </location>
</feature>
<feature type="binding site" evidence="1">
    <location>
        <position position="162"/>
    </location>
    <ligand>
        <name>ATP</name>
        <dbReference type="ChEBI" id="CHEBI:30616"/>
    </ligand>
</feature>
<feature type="binding site" evidence="1">
    <location>
        <begin position="180"/>
        <end position="184"/>
    </location>
    <ligand>
        <name>ATP</name>
        <dbReference type="ChEBI" id="CHEBI:30616"/>
    </ligand>
</feature>
<feature type="binding site" evidence="1">
    <location>
        <position position="726"/>
    </location>
    <ligand>
        <name>ATP</name>
        <dbReference type="ChEBI" id="CHEBI:30616"/>
    </ligand>
</feature>
<protein>
    <recommendedName>
        <fullName evidence="1">Protein translocase subunit SecA</fullName>
        <ecNumber evidence="1">7.4.2.8</ecNumber>
    </recommendedName>
</protein>
<accession>Q2S4E4</accession>
<dbReference type="EC" id="7.4.2.8" evidence="1"/>
<dbReference type="EMBL" id="CP000159">
    <property type="protein sequence ID" value="ABC45488.1"/>
    <property type="molecule type" value="Genomic_DNA"/>
</dbReference>
<dbReference type="RefSeq" id="WP_011403566.1">
    <property type="nucleotide sequence ID" value="NC_007677.1"/>
</dbReference>
<dbReference type="RefSeq" id="YP_444937.1">
    <property type="nucleotide sequence ID" value="NC_007677.1"/>
</dbReference>
<dbReference type="SMR" id="Q2S4E4"/>
<dbReference type="STRING" id="309807.SRU_0801"/>
<dbReference type="EnsemblBacteria" id="ABC45488">
    <property type="protein sequence ID" value="ABC45488"/>
    <property type="gene ID" value="SRU_0801"/>
</dbReference>
<dbReference type="KEGG" id="sru:SRU_0801"/>
<dbReference type="PATRIC" id="fig|309807.25.peg.824"/>
<dbReference type="eggNOG" id="COG0653">
    <property type="taxonomic scope" value="Bacteria"/>
</dbReference>
<dbReference type="HOGENOM" id="CLU_005314_0_0_10"/>
<dbReference type="OrthoDB" id="9805579at2"/>
<dbReference type="Proteomes" id="UP000008674">
    <property type="component" value="Chromosome"/>
</dbReference>
<dbReference type="GO" id="GO:0031522">
    <property type="term" value="C:cell envelope Sec protein transport complex"/>
    <property type="evidence" value="ECO:0007669"/>
    <property type="project" value="TreeGrafter"/>
</dbReference>
<dbReference type="GO" id="GO:0005829">
    <property type="term" value="C:cytosol"/>
    <property type="evidence" value="ECO:0007669"/>
    <property type="project" value="TreeGrafter"/>
</dbReference>
<dbReference type="GO" id="GO:0005886">
    <property type="term" value="C:plasma membrane"/>
    <property type="evidence" value="ECO:0007669"/>
    <property type="project" value="UniProtKB-SubCell"/>
</dbReference>
<dbReference type="GO" id="GO:0005524">
    <property type="term" value="F:ATP binding"/>
    <property type="evidence" value="ECO:0007669"/>
    <property type="project" value="UniProtKB-UniRule"/>
</dbReference>
<dbReference type="GO" id="GO:0008564">
    <property type="term" value="F:protein-exporting ATPase activity"/>
    <property type="evidence" value="ECO:0007669"/>
    <property type="project" value="UniProtKB-EC"/>
</dbReference>
<dbReference type="GO" id="GO:0065002">
    <property type="term" value="P:intracellular protein transmembrane transport"/>
    <property type="evidence" value="ECO:0007669"/>
    <property type="project" value="UniProtKB-UniRule"/>
</dbReference>
<dbReference type="GO" id="GO:0017038">
    <property type="term" value="P:protein import"/>
    <property type="evidence" value="ECO:0007669"/>
    <property type="project" value="InterPro"/>
</dbReference>
<dbReference type="GO" id="GO:0006605">
    <property type="term" value="P:protein targeting"/>
    <property type="evidence" value="ECO:0007669"/>
    <property type="project" value="UniProtKB-UniRule"/>
</dbReference>
<dbReference type="GO" id="GO:0043952">
    <property type="term" value="P:protein transport by the Sec complex"/>
    <property type="evidence" value="ECO:0007669"/>
    <property type="project" value="TreeGrafter"/>
</dbReference>
<dbReference type="CDD" id="cd17928">
    <property type="entry name" value="DEXDc_SecA"/>
    <property type="match status" value="1"/>
</dbReference>
<dbReference type="CDD" id="cd18803">
    <property type="entry name" value="SF2_C_secA"/>
    <property type="match status" value="1"/>
</dbReference>
<dbReference type="FunFam" id="3.40.50.300:FF:000246">
    <property type="entry name" value="Preprotein translocase subunit SecA"/>
    <property type="match status" value="1"/>
</dbReference>
<dbReference type="FunFam" id="3.40.50.300:FF:000429">
    <property type="entry name" value="Preprotein translocase subunit SecA"/>
    <property type="match status" value="1"/>
</dbReference>
<dbReference type="Gene3D" id="1.10.3060.10">
    <property type="entry name" value="Helical scaffold and wing domains of SecA"/>
    <property type="match status" value="1"/>
</dbReference>
<dbReference type="Gene3D" id="3.40.50.300">
    <property type="entry name" value="P-loop containing nucleotide triphosphate hydrolases"/>
    <property type="match status" value="3"/>
</dbReference>
<dbReference type="Gene3D" id="3.90.1440.10">
    <property type="entry name" value="SecA, preprotein cross-linking domain"/>
    <property type="match status" value="1"/>
</dbReference>
<dbReference type="HAMAP" id="MF_01382">
    <property type="entry name" value="SecA"/>
    <property type="match status" value="1"/>
</dbReference>
<dbReference type="InterPro" id="IPR014001">
    <property type="entry name" value="Helicase_ATP-bd"/>
</dbReference>
<dbReference type="InterPro" id="IPR001650">
    <property type="entry name" value="Helicase_C-like"/>
</dbReference>
<dbReference type="InterPro" id="IPR027417">
    <property type="entry name" value="P-loop_NTPase"/>
</dbReference>
<dbReference type="InterPro" id="IPR000185">
    <property type="entry name" value="SecA"/>
</dbReference>
<dbReference type="InterPro" id="IPR011115">
    <property type="entry name" value="SecA_DEAD"/>
</dbReference>
<dbReference type="InterPro" id="IPR014018">
    <property type="entry name" value="SecA_motor_DEAD"/>
</dbReference>
<dbReference type="InterPro" id="IPR011130">
    <property type="entry name" value="SecA_preprotein_X-link_dom"/>
</dbReference>
<dbReference type="InterPro" id="IPR044722">
    <property type="entry name" value="SecA_SF2_C"/>
</dbReference>
<dbReference type="InterPro" id="IPR011116">
    <property type="entry name" value="SecA_Wing/Scaffold"/>
</dbReference>
<dbReference type="InterPro" id="IPR036266">
    <property type="entry name" value="SecA_Wing/Scaffold_sf"/>
</dbReference>
<dbReference type="InterPro" id="IPR036670">
    <property type="entry name" value="SecA_X-link_sf"/>
</dbReference>
<dbReference type="NCBIfam" id="NF009536">
    <property type="entry name" value="PRK12901.1"/>
    <property type="match status" value="1"/>
</dbReference>
<dbReference type="PANTHER" id="PTHR30612:SF0">
    <property type="entry name" value="CHLOROPLAST PROTEIN-TRANSPORTING ATPASE"/>
    <property type="match status" value="1"/>
</dbReference>
<dbReference type="PANTHER" id="PTHR30612">
    <property type="entry name" value="SECA INNER MEMBRANE COMPONENT OF SEC PROTEIN SECRETION SYSTEM"/>
    <property type="match status" value="1"/>
</dbReference>
<dbReference type="Pfam" id="PF21090">
    <property type="entry name" value="P-loop_SecA"/>
    <property type="match status" value="2"/>
</dbReference>
<dbReference type="Pfam" id="PF07517">
    <property type="entry name" value="SecA_DEAD"/>
    <property type="match status" value="1"/>
</dbReference>
<dbReference type="Pfam" id="PF01043">
    <property type="entry name" value="SecA_PP_bind"/>
    <property type="match status" value="1"/>
</dbReference>
<dbReference type="Pfam" id="PF07516">
    <property type="entry name" value="SecA_SW"/>
    <property type="match status" value="1"/>
</dbReference>
<dbReference type="PRINTS" id="PR00906">
    <property type="entry name" value="SECA"/>
</dbReference>
<dbReference type="SMART" id="SM00957">
    <property type="entry name" value="SecA_DEAD"/>
    <property type="match status" value="1"/>
</dbReference>
<dbReference type="SMART" id="SM00958">
    <property type="entry name" value="SecA_PP_bind"/>
    <property type="match status" value="1"/>
</dbReference>
<dbReference type="SUPFAM" id="SSF81886">
    <property type="entry name" value="Helical scaffold and wing domains of SecA"/>
    <property type="match status" value="1"/>
</dbReference>
<dbReference type="SUPFAM" id="SSF52540">
    <property type="entry name" value="P-loop containing nucleoside triphosphate hydrolases"/>
    <property type="match status" value="2"/>
</dbReference>
<dbReference type="SUPFAM" id="SSF81767">
    <property type="entry name" value="Pre-protein crosslinking domain of SecA"/>
    <property type="match status" value="1"/>
</dbReference>
<dbReference type="PROSITE" id="PS51196">
    <property type="entry name" value="SECA_MOTOR_DEAD"/>
    <property type="match status" value="1"/>
</dbReference>
<organism>
    <name type="scientific">Salinibacter ruber (strain DSM 13855 / M31)</name>
    <dbReference type="NCBI Taxonomy" id="309807"/>
    <lineage>
        <taxon>Bacteria</taxon>
        <taxon>Pseudomonadati</taxon>
        <taxon>Rhodothermota</taxon>
        <taxon>Rhodothermia</taxon>
        <taxon>Rhodothermales</taxon>
        <taxon>Salinibacteraceae</taxon>
        <taxon>Salinibacter</taxon>
    </lineage>
</organism>
<name>SECA_SALRD</name>
<reference key="1">
    <citation type="journal article" date="2005" name="Proc. Natl. Acad. Sci. U.S.A.">
        <title>The genome of Salinibacter ruber: convergence and gene exchange among hyperhalophilic bacteria and archaea.</title>
        <authorList>
            <person name="Mongodin E.F."/>
            <person name="Nelson K.E."/>
            <person name="Daugherty S."/>
            <person name="DeBoy R.T."/>
            <person name="Wister J."/>
            <person name="Khouri H."/>
            <person name="Weidman J."/>
            <person name="Walsh D.A."/>
            <person name="Papke R.T."/>
            <person name="Sanchez Perez G."/>
            <person name="Sharma A.K."/>
            <person name="Nesbo C.L."/>
            <person name="MacLeod D."/>
            <person name="Bapteste E."/>
            <person name="Doolittle W.F."/>
            <person name="Charlebois R.L."/>
            <person name="Legault B."/>
            <person name="Rodriguez-Valera F."/>
        </authorList>
    </citation>
    <scope>NUCLEOTIDE SEQUENCE [LARGE SCALE GENOMIC DNA]</scope>
    <source>
        <strain>DSM 13855 / CECT 5946 / M31</strain>
    </source>
</reference>
<comment type="function">
    <text evidence="1">Part of the Sec protein translocase complex. Interacts with the SecYEG preprotein conducting channel. Has a central role in coupling the hydrolysis of ATP to the transfer of proteins into and across the cell membrane, serving as an ATP-driven molecular motor driving the stepwise translocation of polypeptide chains across the membrane.</text>
</comment>
<comment type="catalytic activity">
    <reaction evidence="1">
        <text>ATP + H2O + cellular proteinSide 1 = ADP + phosphate + cellular proteinSide 2.</text>
        <dbReference type="EC" id="7.4.2.8"/>
    </reaction>
</comment>
<comment type="subunit">
    <text evidence="1">Monomer and homodimer. Part of the essential Sec protein translocation apparatus which comprises SecA, SecYEG and auxiliary proteins SecDF. Other proteins may also be involved.</text>
</comment>
<comment type="subcellular location">
    <subcellularLocation>
        <location evidence="1">Cell inner membrane</location>
        <topology evidence="1">Peripheral membrane protein</topology>
        <orientation evidence="1">Cytoplasmic side</orientation>
    </subcellularLocation>
    <subcellularLocation>
        <location evidence="1">Cytoplasm</location>
    </subcellularLocation>
    <text evidence="1">Distribution is 50-50.</text>
</comment>
<comment type="similarity">
    <text evidence="1">Belongs to the SecA family.</text>
</comment>
<evidence type="ECO:0000255" key="1">
    <source>
        <dbReference type="HAMAP-Rule" id="MF_01382"/>
    </source>
</evidence>
<evidence type="ECO:0000256" key="2">
    <source>
        <dbReference type="SAM" id="MobiDB-lite"/>
    </source>
</evidence>
<gene>
    <name evidence="1" type="primary">secA</name>
    <name type="ordered locus">SRU_0801</name>
</gene>
<sequence>MFEWIKNLFGDPNERELNKLWPIVEEINDHYEELQDLTDDELRAKTDAFRAEIREAVADIEARQNEIREKLKRAPGLEGPVGGDGQVTEMEGEALSLDERDALYDEFDELEEEWQDVVEDTLWELLPEAFAVVKETCRRMLGETWMAGGSKIEWDMVPYDVQILGAIVLHQGRIAEMKTGEGKTLAAVMPLYLNALTGRGCQLVTVNDYLAERDTEWMGPIYEFHGLTVDCVNRYDPHTEGRKEAYEADITYGTNNEIGFDYLRDNSFVVRPEQLMQRGHHYAIIDEIDSVLIDEARTPLIISGPVPDQENDEYRELRDPVEQLVEAQRRLVRSFVKETRELLEEKEEAEEEGDSRRAQELEDEAGLSLFRASRGYPKNRQLQKLLNEPGMERLRQKTENFYLQENAKRMPFVDQELYFSVDEKKQTVEMTEKGQEYIAKIMDESEDLFVLPVVGDKIAEVEDEYQEKVDELEEALQEEDLSQEKRENKYMNDKRELEKELQETKREIYNTYSERAERVHAIEQLLKAFTLYERDTEYIVQEGKVQIVDEHTGRVMEGRRYSEGLHEALEAKEEVEIQNATQTYASVTLQNYFRMYDKLSGMTGTAETEAEEFNEIYDLDVVVVPTHEPVRRDDKDDLVFQTKREKYNAIVEKVKEYNKRGQPVLVGSASVEVSETISRTLEREGIPHNVLNAKQDRAKEEAQIVAEAGQKGSVTIATNMAGRGTDIQITDEVRELGGLAILGSERHESRRIDLQLRGRAGRQGDPGESQFYVSLEDDLMRLFGSDRVAKVMDSMGIEEGEVITHPWINKSIKRAQSKVEQNNFAIRKRQLEYDDVLNSQREVIYKRRREALTGERFHGQVLNMLYEYIEALVERHYGQGNIAGLREDLLRTLAFDLEMDREEFVQLGEDGVVDHVYDVATDYYRQKRANIAQPFHQTLRDLKQERGDDMIEQVFVDFTDGQDAIRAVADVDEALETNGEEINEALERTAMLQTIDEKWTDHLRELDELKEGIGLRSFGRKDPVVEYKMEAFDLFSDMMAEIGQEVVSLVFRAGPVVDDEVQTEGQGPRRRLSQRNAQTQHDSAQPDYSIDADGDGGGGQEGEAAERDPTVEEKQPVTVADEPGRNEYVTVRNNANGETTEMKWKYAKKKINQGGWSLVS</sequence>
<proteinExistence type="inferred from homology"/>
<keyword id="KW-0067">ATP-binding</keyword>
<keyword id="KW-0997">Cell inner membrane</keyword>
<keyword id="KW-1003">Cell membrane</keyword>
<keyword id="KW-0963">Cytoplasm</keyword>
<keyword id="KW-0472">Membrane</keyword>
<keyword id="KW-0547">Nucleotide-binding</keyword>
<keyword id="KW-0653">Protein transport</keyword>
<keyword id="KW-1185">Reference proteome</keyword>
<keyword id="KW-1278">Translocase</keyword>
<keyword id="KW-0811">Translocation</keyword>
<keyword id="KW-0813">Transport</keyword>